<name>THIC_NOSP7</name>
<organism>
    <name type="scientific">Nostoc punctiforme (strain ATCC 29133 / PCC 73102)</name>
    <dbReference type="NCBI Taxonomy" id="63737"/>
    <lineage>
        <taxon>Bacteria</taxon>
        <taxon>Bacillati</taxon>
        <taxon>Cyanobacteriota</taxon>
        <taxon>Cyanophyceae</taxon>
        <taxon>Nostocales</taxon>
        <taxon>Nostocaceae</taxon>
        <taxon>Nostoc</taxon>
    </lineage>
</organism>
<feature type="chain" id="PRO_1000093217" description="Phosphomethylpyrimidine synthase">
    <location>
        <begin position="1"/>
        <end position="457"/>
    </location>
</feature>
<feature type="binding site" evidence="1">
    <location>
        <position position="80"/>
    </location>
    <ligand>
        <name>substrate</name>
    </ligand>
</feature>
<feature type="binding site" evidence="1">
    <location>
        <position position="109"/>
    </location>
    <ligand>
        <name>substrate</name>
    </ligand>
</feature>
<feature type="binding site" evidence="1">
    <location>
        <position position="139"/>
    </location>
    <ligand>
        <name>substrate</name>
    </ligand>
</feature>
<feature type="binding site" evidence="1">
    <location>
        <position position="175"/>
    </location>
    <ligand>
        <name>substrate</name>
    </ligand>
</feature>
<feature type="binding site" evidence="1">
    <location>
        <begin position="195"/>
        <end position="197"/>
    </location>
    <ligand>
        <name>substrate</name>
    </ligand>
</feature>
<feature type="binding site" evidence="1">
    <location>
        <begin position="236"/>
        <end position="239"/>
    </location>
    <ligand>
        <name>substrate</name>
    </ligand>
</feature>
<feature type="binding site" evidence="1">
    <location>
        <position position="275"/>
    </location>
    <ligand>
        <name>substrate</name>
    </ligand>
</feature>
<feature type="binding site" evidence="1">
    <location>
        <position position="279"/>
    </location>
    <ligand>
        <name>Zn(2+)</name>
        <dbReference type="ChEBI" id="CHEBI:29105"/>
    </ligand>
</feature>
<feature type="binding site" evidence="1">
    <location>
        <position position="302"/>
    </location>
    <ligand>
        <name>substrate</name>
    </ligand>
</feature>
<feature type="binding site" evidence="1">
    <location>
        <position position="343"/>
    </location>
    <ligand>
        <name>Zn(2+)</name>
        <dbReference type="ChEBI" id="CHEBI:29105"/>
    </ligand>
</feature>
<feature type="binding site" evidence="1">
    <location>
        <position position="423"/>
    </location>
    <ligand>
        <name>[4Fe-4S] cluster</name>
        <dbReference type="ChEBI" id="CHEBI:49883"/>
        <note>4Fe-4S-S-AdoMet</note>
    </ligand>
</feature>
<feature type="binding site" evidence="1">
    <location>
        <position position="426"/>
    </location>
    <ligand>
        <name>[4Fe-4S] cluster</name>
        <dbReference type="ChEBI" id="CHEBI:49883"/>
        <note>4Fe-4S-S-AdoMet</note>
    </ligand>
</feature>
<feature type="binding site" evidence="1">
    <location>
        <position position="431"/>
    </location>
    <ligand>
        <name>[4Fe-4S] cluster</name>
        <dbReference type="ChEBI" id="CHEBI:49883"/>
        <note>4Fe-4S-S-AdoMet</note>
    </ligand>
</feature>
<proteinExistence type="inferred from homology"/>
<accession>B2J323</accession>
<protein>
    <recommendedName>
        <fullName evidence="1">Phosphomethylpyrimidine synthase</fullName>
        <ecNumber evidence="1">4.1.99.17</ecNumber>
    </recommendedName>
    <alternativeName>
        <fullName evidence="1">Hydroxymethylpyrimidine phosphate synthase</fullName>
        <shortName evidence="1">HMP-P synthase</shortName>
        <shortName evidence="1">HMP-phosphate synthase</shortName>
        <shortName evidence="1">HMPP synthase</shortName>
    </alternativeName>
    <alternativeName>
        <fullName evidence="1">Thiamine biosynthesis protein ThiC</fullName>
    </alternativeName>
</protein>
<evidence type="ECO:0000255" key="1">
    <source>
        <dbReference type="HAMAP-Rule" id="MF_00089"/>
    </source>
</evidence>
<reference key="1">
    <citation type="journal article" date="2013" name="Plant Physiol.">
        <title>A Nostoc punctiforme Sugar Transporter Necessary to Establish a Cyanobacterium-Plant Symbiosis.</title>
        <authorList>
            <person name="Ekman M."/>
            <person name="Picossi S."/>
            <person name="Campbell E.L."/>
            <person name="Meeks J.C."/>
            <person name="Flores E."/>
        </authorList>
    </citation>
    <scope>NUCLEOTIDE SEQUENCE [LARGE SCALE GENOMIC DNA]</scope>
    <source>
        <strain>ATCC 29133 / PCC 73102</strain>
    </source>
</reference>
<sequence>MRTEWVAKRRGQVNVSQMHYARQGVITEEMHYVAQRENLPTDLIRDEVARGRMIIPANINHTNLEPMAIGIASKCKVNANIGASPNSSNLQEEVDKLNLAVKYGADTVMDLSTGGGNLDEIRTAIIKASPVPIGTVPVYQALESVHGTIENLTADDFLHIIEKHAQQGVDYQTIHAGILIEHLPLVRNRITGIVSRGGGILARWMLHHHKQNPLYTHFQDIIEIFKRYDVSFSLGDSLRPGCTHDASDEAQLAELKTLGQLTRKAWEDDVQVMVEGPGHVPMDQIEFNVRKQMEECSEAPFYVLGPLVTDIAPGYDHITSAIGAAMAGWYGTAMLCYVTPKEHLGLPNAEDVRNGLIAYKIAAHAADIARHRPGARDRDDELSKARYNFDWNRQFELSLDPERAKEYHDETLPADIYKTAEFCSMCGPKFCPMQTKVDADALTELEKFLAKEPVTQS</sequence>
<dbReference type="EC" id="4.1.99.17" evidence="1"/>
<dbReference type="EMBL" id="CP001037">
    <property type="protein sequence ID" value="ACC82090.1"/>
    <property type="molecule type" value="Genomic_DNA"/>
</dbReference>
<dbReference type="RefSeq" id="WP_012410061.1">
    <property type="nucleotide sequence ID" value="NC_010628.1"/>
</dbReference>
<dbReference type="SMR" id="B2J323"/>
<dbReference type="STRING" id="63737.Npun_R3700"/>
<dbReference type="EnsemblBacteria" id="ACC82090">
    <property type="protein sequence ID" value="ACC82090"/>
    <property type="gene ID" value="Npun_R3700"/>
</dbReference>
<dbReference type="KEGG" id="npu:Npun_R3700"/>
<dbReference type="eggNOG" id="COG0422">
    <property type="taxonomic scope" value="Bacteria"/>
</dbReference>
<dbReference type="HOGENOM" id="CLU_013181_2_2_3"/>
<dbReference type="OrthoDB" id="9805897at2"/>
<dbReference type="PhylomeDB" id="B2J323"/>
<dbReference type="UniPathway" id="UPA00060"/>
<dbReference type="Proteomes" id="UP000001191">
    <property type="component" value="Chromosome"/>
</dbReference>
<dbReference type="GO" id="GO:0005829">
    <property type="term" value="C:cytosol"/>
    <property type="evidence" value="ECO:0007669"/>
    <property type="project" value="TreeGrafter"/>
</dbReference>
<dbReference type="GO" id="GO:0051539">
    <property type="term" value="F:4 iron, 4 sulfur cluster binding"/>
    <property type="evidence" value="ECO:0007669"/>
    <property type="project" value="UniProtKB-KW"/>
</dbReference>
<dbReference type="GO" id="GO:0016830">
    <property type="term" value="F:carbon-carbon lyase activity"/>
    <property type="evidence" value="ECO:0007669"/>
    <property type="project" value="InterPro"/>
</dbReference>
<dbReference type="GO" id="GO:0008270">
    <property type="term" value="F:zinc ion binding"/>
    <property type="evidence" value="ECO:0007669"/>
    <property type="project" value="UniProtKB-UniRule"/>
</dbReference>
<dbReference type="GO" id="GO:0009228">
    <property type="term" value="P:thiamine biosynthetic process"/>
    <property type="evidence" value="ECO:0007669"/>
    <property type="project" value="UniProtKB-KW"/>
</dbReference>
<dbReference type="GO" id="GO:0009229">
    <property type="term" value="P:thiamine diphosphate biosynthetic process"/>
    <property type="evidence" value="ECO:0007669"/>
    <property type="project" value="UniProtKB-UniRule"/>
</dbReference>
<dbReference type="FunFam" id="3.20.20.540:FF:000001">
    <property type="entry name" value="Phosphomethylpyrimidine synthase"/>
    <property type="match status" value="1"/>
</dbReference>
<dbReference type="Gene3D" id="6.10.250.620">
    <property type="match status" value="1"/>
</dbReference>
<dbReference type="Gene3D" id="3.20.20.540">
    <property type="entry name" value="Radical SAM ThiC family, central domain"/>
    <property type="match status" value="1"/>
</dbReference>
<dbReference type="HAMAP" id="MF_00089">
    <property type="entry name" value="ThiC"/>
    <property type="match status" value="1"/>
</dbReference>
<dbReference type="InterPro" id="IPR037509">
    <property type="entry name" value="ThiC"/>
</dbReference>
<dbReference type="InterPro" id="IPR038521">
    <property type="entry name" value="ThiC/Bza_core_dom"/>
</dbReference>
<dbReference type="InterPro" id="IPR002817">
    <property type="entry name" value="ThiC/BzaA/B"/>
</dbReference>
<dbReference type="NCBIfam" id="NF006763">
    <property type="entry name" value="PRK09284.1"/>
    <property type="match status" value="1"/>
</dbReference>
<dbReference type="NCBIfam" id="NF009895">
    <property type="entry name" value="PRK13352.1"/>
    <property type="match status" value="1"/>
</dbReference>
<dbReference type="NCBIfam" id="TIGR00190">
    <property type="entry name" value="thiC"/>
    <property type="match status" value="1"/>
</dbReference>
<dbReference type="PANTHER" id="PTHR30557:SF1">
    <property type="entry name" value="PHOSPHOMETHYLPYRIMIDINE SYNTHASE, CHLOROPLASTIC"/>
    <property type="match status" value="1"/>
</dbReference>
<dbReference type="PANTHER" id="PTHR30557">
    <property type="entry name" value="THIAMINE BIOSYNTHESIS PROTEIN THIC"/>
    <property type="match status" value="1"/>
</dbReference>
<dbReference type="Pfam" id="PF01964">
    <property type="entry name" value="ThiC_Rad_SAM"/>
    <property type="match status" value="1"/>
</dbReference>
<dbReference type="SFLD" id="SFLDF00407">
    <property type="entry name" value="phosphomethylpyrimidine_syntha"/>
    <property type="match status" value="1"/>
</dbReference>
<dbReference type="SFLD" id="SFLDG01114">
    <property type="entry name" value="phosphomethylpyrimidine_syntha"/>
    <property type="match status" value="1"/>
</dbReference>
<dbReference type="SFLD" id="SFLDS00113">
    <property type="entry name" value="Radical_SAM_Phosphomethylpyrim"/>
    <property type="match status" value="1"/>
</dbReference>
<comment type="function">
    <text evidence="1">Catalyzes the synthesis of the hydroxymethylpyrimidine phosphate (HMP-P) moiety of thiamine from aminoimidazole ribotide (AIR) in a radical S-adenosyl-L-methionine (SAM)-dependent reaction.</text>
</comment>
<comment type="catalytic activity">
    <reaction evidence="1">
        <text>5-amino-1-(5-phospho-beta-D-ribosyl)imidazole + S-adenosyl-L-methionine = 4-amino-2-methyl-5-(phosphooxymethyl)pyrimidine + CO + 5'-deoxyadenosine + formate + L-methionine + 3 H(+)</text>
        <dbReference type="Rhea" id="RHEA:24840"/>
        <dbReference type="ChEBI" id="CHEBI:15378"/>
        <dbReference type="ChEBI" id="CHEBI:15740"/>
        <dbReference type="ChEBI" id="CHEBI:17245"/>
        <dbReference type="ChEBI" id="CHEBI:17319"/>
        <dbReference type="ChEBI" id="CHEBI:57844"/>
        <dbReference type="ChEBI" id="CHEBI:58354"/>
        <dbReference type="ChEBI" id="CHEBI:59789"/>
        <dbReference type="ChEBI" id="CHEBI:137981"/>
        <dbReference type="EC" id="4.1.99.17"/>
    </reaction>
</comment>
<comment type="cofactor">
    <cofactor evidence="1">
        <name>[4Fe-4S] cluster</name>
        <dbReference type="ChEBI" id="CHEBI:49883"/>
    </cofactor>
    <text evidence="1">Binds 1 [4Fe-4S] cluster per subunit. The cluster is coordinated with 3 cysteines and an exchangeable S-adenosyl-L-methionine.</text>
</comment>
<comment type="pathway">
    <text evidence="1">Cofactor biosynthesis; thiamine diphosphate biosynthesis.</text>
</comment>
<comment type="similarity">
    <text evidence="1">Belongs to the ThiC family.</text>
</comment>
<gene>
    <name evidence="1" type="primary">thiC</name>
    <name type="ordered locus">Npun_R3700</name>
</gene>
<keyword id="KW-0004">4Fe-4S</keyword>
<keyword id="KW-0408">Iron</keyword>
<keyword id="KW-0411">Iron-sulfur</keyword>
<keyword id="KW-0456">Lyase</keyword>
<keyword id="KW-0479">Metal-binding</keyword>
<keyword id="KW-1185">Reference proteome</keyword>
<keyword id="KW-0949">S-adenosyl-L-methionine</keyword>
<keyword id="KW-0784">Thiamine biosynthesis</keyword>
<keyword id="KW-0862">Zinc</keyword>